<protein>
    <recommendedName>
        <fullName evidence="1">Acetylglutamate kinase</fullName>
        <ecNumber evidence="1">2.7.2.8</ecNumber>
    </recommendedName>
    <alternativeName>
        <fullName evidence="1">N-acetyl-L-glutamate 5-phosphotransferase</fullName>
    </alternativeName>
    <alternativeName>
        <fullName evidence="1">NAG kinase</fullName>
        <shortName evidence="1">NAGK</shortName>
    </alternativeName>
</protein>
<organism>
    <name type="scientific">Ectopseudomonas mendocina (strain ymp)</name>
    <name type="common">Pseudomonas mendocina</name>
    <dbReference type="NCBI Taxonomy" id="399739"/>
    <lineage>
        <taxon>Bacteria</taxon>
        <taxon>Pseudomonadati</taxon>
        <taxon>Pseudomonadota</taxon>
        <taxon>Gammaproteobacteria</taxon>
        <taxon>Pseudomonadales</taxon>
        <taxon>Pseudomonadaceae</taxon>
        <taxon>Ectopseudomonas</taxon>
    </lineage>
</organism>
<name>ARGB_ECTM1</name>
<proteinExistence type="inferred from homology"/>
<feature type="chain" id="PRO_1000010530" description="Acetylglutamate kinase">
    <location>
        <begin position="1"/>
        <end position="301"/>
    </location>
</feature>
<feature type="binding site" evidence="1">
    <location>
        <begin position="68"/>
        <end position="69"/>
    </location>
    <ligand>
        <name>substrate</name>
    </ligand>
</feature>
<feature type="binding site" evidence="1">
    <location>
        <position position="90"/>
    </location>
    <ligand>
        <name>substrate</name>
    </ligand>
</feature>
<feature type="binding site" evidence="1">
    <location>
        <position position="195"/>
    </location>
    <ligand>
        <name>substrate</name>
    </ligand>
</feature>
<feature type="site" description="Transition state stabilizer" evidence="1">
    <location>
        <position position="33"/>
    </location>
</feature>
<feature type="site" description="Transition state stabilizer" evidence="1">
    <location>
        <position position="255"/>
    </location>
</feature>
<reference key="1">
    <citation type="submission" date="2007-04" db="EMBL/GenBank/DDBJ databases">
        <title>Complete sequence of Pseudomonas mendocina ymp.</title>
        <authorList>
            <consortium name="US DOE Joint Genome Institute"/>
            <person name="Copeland A."/>
            <person name="Lucas S."/>
            <person name="Lapidus A."/>
            <person name="Barry K."/>
            <person name="Glavina del Rio T."/>
            <person name="Dalin E."/>
            <person name="Tice H."/>
            <person name="Pitluck S."/>
            <person name="Kiss H."/>
            <person name="Brettin T."/>
            <person name="Detter J.C."/>
            <person name="Bruce D."/>
            <person name="Han C."/>
            <person name="Schmutz J."/>
            <person name="Larimer F."/>
            <person name="Land M."/>
            <person name="Hauser L."/>
            <person name="Kyrpides N."/>
            <person name="Mikhailova N."/>
            <person name="Hersman L."/>
            <person name="Dubois J."/>
            <person name="Maurice P."/>
            <person name="Richardson P."/>
        </authorList>
    </citation>
    <scope>NUCLEOTIDE SEQUENCE [LARGE SCALE GENOMIC DNA]</scope>
    <source>
        <strain>ymp</strain>
    </source>
</reference>
<keyword id="KW-0028">Amino-acid biosynthesis</keyword>
<keyword id="KW-0055">Arginine biosynthesis</keyword>
<keyword id="KW-0067">ATP-binding</keyword>
<keyword id="KW-0963">Cytoplasm</keyword>
<keyword id="KW-0418">Kinase</keyword>
<keyword id="KW-0547">Nucleotide-binding</keyword>
<keyword id="KW-0808">Transferase</keyword>
<evidence type="ECO:0000255" key="1">
    <source>
        <dbReference type="HAMAP-Rule" id="MF_00082"/>
    </source>
</evidence>
<dbReference type="EC" id="2.7.2.8" evidence="1"/>
<dbReference type="EMBL" id="CP000680">
    <property type="protein sequence ID" value="ABP87127.1"/>
    <property type="molecule type" value="Genomic_DNA"/>
</dbReference>
<dbReference type="SMR" id="A4Y0L1"/>
<dbReference type="STRING" id="399739.Pmen_4380"/>
<dbReference type="KEGG" id="pmy:Pmen_4380"/>
<dbReference type="PATRIC" id="fig|399739.8.peg.4438"/>
<dbReference type="eggNOG" id="COG0548">
    <property type="taxonomic scope" value="Bacteria"/>
</dbReference>
<dbReference type="HOGENOM" id="CLU_053680_0_0_6"/>
<dbReference type="OrthoDB" id="9803155at2"/>
<dbReference type="UniPathway" id="UPA00068">
    <property type="reaction ID" value="UER00107"/>
</dbReference>
<dbReference type="GO" id="GO:0005737">
    <property type="term" value="C:cytoplasm"/>
    <property type="evidence" value="ECO:0007669"/>
    <property type="project" value="UniProtKB-SubCell"/>
</dbReference>
<dbReference type="GO" id="GO:0003991">
    <property type="term" value="F:acetylglutamate kinase activity"/>
    <property type="evidence" value="ECO:0007669"/>
    <property type="project" value="UniProtKB-UniRule"/>
</dbReference>
<dbReference type="GO" id="GO:0005524">
    <property type="term" value="F:ATP binding"/>
    <property type="evidence" value="ECO:0007669"/>
    <property type="project" value="UniProtKB-UniRule"/>
</dbReference>
<dbReference type="GO" id="GO:0042450">
    <property type="term" value="P:arginine biosynthetic process via ornithine"/>
    <property type="evidence" value="ECO:0007669"/>
    <property type="project" value="UniProtKB-UniRule"/>
</dbReference>
<dbReference type="GO" id="GO:0006526">
    <property type="term" value="P:L-arginine biosynthetic process"/>
    <property type="evidence" value="ECO:0007669"/>
    <property type="project" value="UniProtKB-UniPathway"/>
</dbReference>
<dbReference type="CDD" id="cd04250">
    <property type="entry name" value="AAK_NAGK-C"/>
    <property type="match status" value="1"/>
</dbReference>
<dbReference type="FunFam" id="3.40.1160.10:FF:000004">
    <property type="entry name" value="Acetylglutamate kinase"/>
    <property type="match status" value="1"/>
</dbReference>
<dbReference type="Gene3D" id="3.40.1160.10">
    <property type="entry name" value="Acetylglutamate kinase-like"/>
    <property type="match status" value="1"/>
</dbReference>
<dbReference type="HAMAP" id="MF_00082">
    <property type="entry name" value="ArgB"/>
    <property type="match status" value="1"/>
</dbReference>
<dbReference type="InterPro" id="IPR036393">
    <property type="entry name" value="AceGlu_kinase-like_sf"/>
</dbReference>
<dbReference type="InterPro" id="IPR004662">
    <property type="entry name" value="AcgluKinase_fam"/>
</dbReference>
<dbReference type="InterPro" id="IPR037528">
    <property type="entry name" value="ArgB"/>
</dbReference>
<dbReference type="InterPro" id="IPR001048">
    <property type="entry name" value="Asp/Glu/Uridylate_kinase"/>
</dbReference>
<dbReference type="InterPro" id="IPR041727">
    <property type="entry name" value="NAGK-C"/>
</dbReference>
<dbReference type="NCBIfam" id="TIGR00761">
    <property type="entry name" value="argB"/>
    <property type="match status" value="1"/>
</dbReference>
<dbReference type="PANTHER" id="PTHR23342">
    <property type="entry name" value="N-ACETYLGLUTAMATE SYNTHASE"/>
    <property type="match status" value="1"/>
</dbReference>
<dbReference type="PANTHER" id="PTHR23342:SF0">
    <property type="entry name" value="N-ACETYLGLUTAMATE SYNTHASE, MITOCHONDRIAL"/>
    <property type="match status" value="1"/>
</dbReference>
<dbReference type="Pfam" id="PF00696">
    <property type="entry name" value="AA_kinase"/>
    <property type="match status" value="1"/>
</dbReference>
<dbReference type="PIRSF" id="PIRSF000728">
    <property type="entry name" value="NAGK"/>
    <property type="match status" value="1"/>
</dbReference>
<dbReference type="SUPFAM" id="SSF53633">
    <property type="entry name" value="Carbamate kinase-like"/>
    <property type="match status" value="1"/>
</dbReference>
<comment type="function">
    <text evidence="1">Catalyzes the ATP-dependent phosphorylation of N-acetyl-L-glutamate.</text>
</comment>
<comment type="catalytic activity">
    <reaction evidence="1">
        <text>N-acetyl-L-glutamate + ATP = N-acetyl-L-glutamyl 5-phosphate + ADP</text>
        <dbReference type="Rhea" id="RHEA:14629"/>
        <dbReference type="ChEBI" id="CHEBI:30616"/>
        <dbReference type="ChEBI" id="CHEBI:44337"/>
        <dbReference type="ChEBI" id="CHEBI:57936"/>
        <dbReference type="ChEBI" id="CHEBI:456216"/>
        <dbReference type="EC" id="2.7.2.8"/>
    </reaction>
</comment>
<comment type="pathway">
    <text evidence="1">Amino-acid biosynthesis; L-arginine biosynthesis; N(2)-acetyl-L-ornithine from L-glutamate: step 2/4.</text>
</comment>
<comment type="subcellular location">
    <subcellularLocation>
        <location evidence="1">Cytoplasm</location>
    </subcellularLocation>
</comment>
<comment type="similarity">
    <text evidence="1">Belongs to the acetylglutamate kinase family. ArgB subfamily.</text>
</comment>
<sequence>MTLERDAAAQVAKVLSEALPYIRRFVGKTLVIKYGGNAMESEELKQGFARDIVLMKAVGINPVVVHGGGPQIGDLLKRLSIESHFIDGMRVTDTATMDVVEMVLGGQVNKSIVNLINQHGGSAIGLTGKDAGLIRAKKLKVTRQTPEMTQPEIIDIGHVGEVTGVNTELLNMLVQGDFIPVIAPIGVGPDGESYNINADLVAGKVAEALKAEKLMLLTNIAGLLDKQGEVLTGLTTEQVDGLIADGTIYGGMLPKIRCALEAVQGGVHSAHIVDGRVPNAVLLEIFTDSGVGTLITNRKRH</sequence>
<accession>A4Y0L1</accession>
<gene>
    <name evidence="1" type="primary">argB</name>
    <name type="ordered locus">Pmen_4380</name>
</gene>